<dbReference type="EMBL" id="AAFI02000008">
    <property type="protein sequence ID" value="EAL71181.1"/>
    <property type="molecule type" value="Genomic_DNA"/>
</dbReference>
<dbReference type="RefSeq" id="XP_645128.1">
    <property type="nucleotide sequence ID" value="XM_640036.1"/>
</dbReference>
<dbReference type="SMR" id="Q7KWT8"/>
<dbReference type="PaxDb" id="44689-DDB0168862"/>
<dbReference type="EnsemblProtists" id="EAL71181">
    <property type="protein sequence ID" value="EAL71181"/>
    <property type="gene ID" value="DDB_G0272514"/>
</dbReference>
<dbReference type="GeneID" id="8618522"/>
<dbReference type="KEGG" id="ddi:DDB_G0272514"/>
<dbReference type="dictyBase" id="DDB_G0272514"/>
<dbReference type="HOGENOM" id="CLU_3072684_0_0_1"/>
<dbReference type="InParanoid" id="Q7KWT8"/>
<dbReference type="PRO" id="PR:Q7KWT8"/>
<dbReference type="Proteomes" id="UP000002195">
    <property type="component" value="Chromosome 2"/>
</dbReference>
<keyword id="KW-1185">Reference proteome</keyword>
<name>Y8862_DICDI</name>
<gene>
    <name type="ORF">DDB_G0272514</name>
</gene>
<proteinExistence type="predicted"/>
<sequence>MDSLSNYSNSLSSSGEISNKFAKIGSSILYGYYDYLTATSRVLHGEDKIKNTK</sequence>
<feature type="chain" id="PRO_0000348172" description="Uncharacterized protein DDB_G0272514">
    <location>
        <begin position="1"/>
        <end position="53"/>
    </location>
</feature>
<reference key="1">
    <citation type="journal article" date="2002" name="Nature">
        <title>Sequence and analysis of chromosome 2 of Dictyostelium discoideum.</title>
        <authorList>
            <person name="Gloeckner G."/>
            <person name="Eichinger L."/>
            <person name="Szafranski K."/>
            <person name="Pachebat J.A."/>
            <person name="Bankier A.T."/>
            <person name="Dear P.H."/>
            <person name="Lehmann R."/>
            <person name="Baumgart C."/>
            <person name="Parra G."/>
            <person name="Abril J.F."/>
            <person name="Guigo R."/>
            <person name="Kumpf K."/>
            <person name="Tunggal B."/>
            <person name="Cox E.C."/>
            <person name="Quail M.A."/>
            <person name="Platzer M."/>
            <person name="Rosenthal A."/>
            <person name="Noegel A.A."/>
        </authorList>
    </citation>
    <scope>NUCLEOTIDE SEQUENCE [LARGE SCALE GENOMIC DNA]</scope>
    <source>
        <strain>AX4</strain>
    </source>
</reference>
<reference key="2">
    <citation type="journal article" date="2005" name="Nature">
        <title>The genome of the social amoeba Dictyostelium discoideum.</title>
        <authorList>
            <person name="Eichinger L."/>
            <person name="Pachebat J.A."/>
            <person name="Gloeckner G."/>
            <person name="Rajandream M.A."/>
            <person name="Sucgang R."/>
            <person name="Berriman M."/>
            <person name="Song J."/>
            <person name="Olsen R."/>
            <person name="Szafranski K."/>
            <person name="Xu Q."/>
            <person name="Tunggal B."/>
            <person name="Kummerfeld S."/>
            <person name="Madera M."/>
            <person name="Konfortov B.A."/>
            <person name="Rivero F."/>
            <person name="Bankier A.T."/>
            <person name="Lehmann R."/>
            <person name="Hamlin N."/>
            <person name="Davies R."/>
            <person name="Gaudet P."/>
            <person name="Fey P."/>
            <person name="Pilcher K."/>
            <person name="Chen G."/>
            <person name="Saunders D."/>
            <person name="Sodergren E.J."/>
            <person name="Davis P."/>
            <person name="Kerhornou A."/>
            <person name="Nie X."/>
            <person name="Hall N."/>
            <person name="Anjard C."/>
            <person name="Hemphill L."/>
            <person name="Bason N."/>
            <person name="Farbrother P."/>
            <person name="Desany B."/>
            <person name="Just E."/>
            <person name="Morio T."/>
            <person name="Rost R."/>
            <person name="Churcher C.M."/>
            <person name="Cooper J."/>
            <person name="Haydock S."/>
            <person name="van Driessche N."/>
            <person name="Cronin A."/>
            <person name="Goodhead I."/>
            <person name="Muzny D.M."/>
            <person name="Mourier T."/>
            <person name="Pain A."/>
            <person name="Lu M."/>
            <person name="Harper D."/>
            <person name="Lindsay R."/>
            <person name="Hauser H."/>
            <person name="James K.D."/>
            <person name="Quiles M."/>
            <person name="Madan Babu M."/>
            <person name="Saito T."/>
            <person name="Buchrieser C."/>
            <person name="Wardroper A."/>
            <person name="Felder M."/>
            <person name="Thangavelu M."/>
            <person name="Johnson D."/>
            <person name="Knights A."/>
            <person name="Loulseged H."/>
            <person name="Mungall K.L."/>
            <person name="Oliver K."/>
            <person name="Price C."/>
            <person name="Quail M.A."/>
            <person name="Urushihara H."/>
            <person name="Hernandez J."/>
            <person name="Rabbinowitsch E."/>
            <person name="Steffen D."/>
            <person name="Sanders M."/>
            <person name="Ma J."/>
            <person name="Kohara Y."/>
            <person name="Sharp S."/>
            <person name="Simmonds M.N."/>
            <person name="Spiegler S."/>
            <person name="Tivey A."/>
            <person name="Sugano S."/>
            <person name="White B."/>
            <person name="Walker D."/>
            <person name="Woodward J.R."/>
            <person name="Winckler T."/>
            <person name="Tanaka Y."/>
            <person name="Shaulsky G."/>
            <person name="Schleicher M."/>
            <person name="Weinstock G.M."/>
            <person name="Rosenthal A."/>
            <person name="Cox E.C."/>
            <person name="Chisholm R.L."/>
            <person name="Gibbs R.A."/>
            <person name="Loomis W.F."/>
            <person name="Platzer M."/>
            <person name="Kay R.R."/>
            <person name="Williams J.G."/>
            <person name="Dear P.H."/>
            <person name="Noegel A.A."/>
            <person name="Barrell B.G."/>
            <person name="Kuspa A."/>
        </authorList>
    </citation>
    <scope>NUCLEOTIDE SEQUENCE [LARGE SCALE GENOMIC DNA]</scope>
    <source>
        <strain>AX4</strain>
    </source>
</reference>
<organism>
    <name type="scientific">Dictyostelium discoideum</name>
    <name type="common">Social amoeba</name>
    <dbReference type="NCBI Taxonomy" id="44689"/>
    <lineage>
        <taxon>Eukaryota</taxon>
        <taxon>Amoebozoa</taxon>
        <taxon>Evosea</taxon>
        <taxon>Eumycetozoa</taxon>
        <taxon>Dictyostelia</taxon>
        <taxon>Dictyosteliales</taxon>
        <taxon>Dictyosteliaceae</taxon>
        <taxon>Dictyostelium</taxon>
    </lineage>
</organism>
<accession>Q7KWT8</accession>
<accession>Q559H8</accession>
<protein>
    <recommendedName>
        <fullName>Uncharacterized protein DDB_G0272514</fullName>
    </recommendedName>
</protein>